<feature type="chain" id="PRO_0000223793" description="Acetyl-coenzyme A carboxylase carboxyl transferase subunit alpha">
    <location>
        <begin position="1"/>
        <end position="322"/>
    </location>
</feature>
<feature type="domain" description="CoA carboxyltransferase C-terminal" evidence="2">
    <location>
        <begin position="30"/>
        <end position="293"/>
    </location>
</feature>
<organism>
    <name type="scientific">Nitrosomonas europaea (strain ATCC 19718 / CIP 103999 / KCTC 2705 / NBRC 14298)</name>
    <dbReference type="NCBI Taxonomy" id="228410"/>
    <lineage>
        <taxon>Bacteria</taxon>
        <taxon>Pseudomonadati</taxon>
        <taxon>Pseudomonadota</taxon>
        <taxon>Betaproteobacteria</taxon>
        <taxon>Nitrosomonadales</taxon>
        <taxon>Nitrosomonadaceae</taxon>
        <taxon>Nitrosomonas</taxon>
    </lineage>
</organism>
<evidence type="ECO:0000255" key="1">
    <source>
        <dbReference type="HAMAP-Rule" id="MF_00823"/>
    </source>
</evidence>
<evidence type="ECO:0000255" key="2">
    <source>
        <dbReference type="PROSITE-ProRule" id="PRU01137"/>
    </source>
</evidence>
<accession>Q82VP5</accession>
<protein>
    <recommendedName>
        <fullName evidence="1">Acetyl-coenzyme A carboxylase carboxyl transferase subunit alpha</fullName>
        <shortName evidence="1">ACCase subunit alpha</shortName>
        <shortName evidence="1">Acetyl-CoA carboxylase carboxyltransferase subunit alpha</shortName>
        <ecNumber evidence="1">2.1.3.15</ecNumber>
    </recommendedName>
</protein>
<keyword id="KW-0067">ATP-binding</keyword>
<keyword id="KW-0963">Cytoplasm</keyword>
<keyword id="KW-0275">Fatty acid biosynthesis</keyword>
<keyword id="KW-0276">Fatty acid metabolism</keyword>
<keyword id="KW-0444">Lipid biosynthesis</keyword>
<keyword id="KW-0443">Lipid metabolism</keyword>
<keyword id="KW-0547">Nucleotide-binding</keyword>
<keyword id="KW-1185">Reference proteome</keyword>
<keyword id="KW-0808">Transferase</keyword>
<reference key="1">
    <citation type="journal article" date="2003" name="J. Bacteriol.">
        <title>Complete genome sequence of the ammonia-oxidizing bacterium and obligate chemolithoautotroph Nitrosomonas europaea.</title>
        <authorList>
            <person name="Chain P."/>
            <person name="Lamerdin J.E."/>
            <person name="Larimer F.W."/>
            <person name="Regala W."/>
            <person name="Lao V."/>
            <person name="Land M.L."/>
            <person name="Hauser L."/>
            <person name="Hooper A.B."/>
            <person name="Klotz M.G."/>
            <person name="Norton J."/>
            <person name="Sayavedra-Soto L.A."/>
            <person name="Arciero D.M."/>
            <person name="Hommes N.G."/>
            <person name="Whittaker M.M."/>
            <person name="Arp D.J."/>
        </authorList>
    </citation>
    <scope>NUCLEOTIDE SEQUENCE [LARGE SCALE GENOMIC DNA]</scope>
    <source>
        <strain>ATCC 19718 / CIP 103999 / KCTC 2705 / NBRC 14298</strain>
    </source>
</reference>
<proteinExistence type="inferred from homology"/>
<comment type="function">
    <text evidence="1">Component of the acetyl coenzyme A carboxylase (ACC) complex. First, biotin carboxylase catalyzes the carboxylation of biotin on its carrier protein (BCCP) and then the CO(2) group is transferred by the carboxyltransferase to acetyl-CoA to form malonyl-CoA.</text>
</comment>
<comment type="catalytic activity">
    <reaction evidence="1">
        <text>N(6)-carboxybiotinyl-L-lysyl-[protein] + acetyl-CoA = N(6)-biotinyl-L-lysyl-[protein] + malonyl-CoA</text>
        <dbReference type="Rhea" id="RHEA:54728"/>
        <dbReference type="Rhea" id="RHEA-COMP:10505"/>
        <dbReference type="Rhea" id="RHEA-COMP:10506"/>
        <dbReference type="ChEBI" id="CHEBI:57288"/>
        <dbReference type="ChEBI" id="CHEBI:57384"/>
        <dbReference type="ChEBI" id="CHEBI:83144"/>
        <dbReference type="ChEBI" id="CHEBI:83145"/>
        <dbReference type="EC" id="2.1.3.15"/>
    </reaction>
</comment>
<comment type="pathway">
    <text evidence="1">Lipid metabolism; malonyl-CoA biosynthesis; malonyl-CoA from acetyl-CoA: step 1/1.</text>
</comment>
<comment type="subunit">
    <text evidence="1">Acetyl-CoA carboxylase is a heterohexamer composed of biotin carboxyl carrier protein (AccB), biotin carboxylase (AccC) and two subunits each of ACCase subunit alpha (AccA) and ACCase subunit beta (AccD).</text>
</comment>
<comment type="subcellular location">
    <subcellularLocation>
        <location evidence="1">Cytoplasm</location>
    </subcellularLocation>
</comment>
<comment type="similarity">
    <text evidence="1">Belongs to the AccA family.</text>
</comment>
<name>ACCA_NITEU</name>
<gene>
    <name evidence="1" type="primary">accA</name>
    <name type="ordered locus">NE1021</name>
</gene>
<dbReference type="EC" id="2.1.3.15" evidence="1"/>
<dbReference type="EMBL" id="AL954747">
    <property type="protein sequence ID" value="CAD84932.1"/>
    <property type="molecule type" value="Genomic_DNA"/>
</dbReference>
<dbReference type="RefSeq" id="WP_011111630.1">
    <property type="nucleotide sequence ID" value="NC_004757.1"/>
</dbReference>
<dbReference type="SMR" id="Q82VP5"/>
<dbReference type="STRING" id="228410.NE1021"/>
<dbReference type="GeneID" id="87104212"/>
<dbReference type="KEGG" id="neu:NE1021"/>
<dbReference type="eggNOG" id="COG0825">
    <property type="taxonomic scope" value="Bacteria"/>
</dbReference>
<dbReference type="HOGENOM" id="CLU_015486_0_2_4"/>
<dbReference type="OrthoDB" id="9808023at2"/>
<dbReference type="PhylomeDB" id="Q82VP5"/>
<dbReference type="UniPathway" id="UPA00655">
    <property type="reaction ID" value="UER00711"/>
</dbReference>
<dbReference type="Proteomes" id="UP000001416">
    <property type="component" value="Chromosome"/>
</dbReference>
<dbReference type="GO" id="GO:0009317">
    <property type="term" value="C:acetyl-CoA carboxylase complex"/>
    <property type="evidence" value="ECO:0007669"/>
    <property type="project" value="InterPro"/>
</dbReference>
<dbReference type="GO" id="GO:0003989">
    <property type="term" value="F:acetyl-CoA carboxylase activity"/>
    <property type="evidence" value="ECO:0007669"/>
    <property type="project" value="InterPro"/>
</dbReference>
<dbReference type="GO" id="GO:0005524">
    <property type="term" value="F:ATP binding"/>
    <property type="evidence" value="ECO:0007669"/>
    <property type="project" value="UniProtKB-KW"/>
</dbReference>
<dbReference type="GO" id="GO:0016743">
    <property type="term" value="F:carboxyl- or carbamoyltransferase activity"/>
    <property type="evidence" value="ECO:0007669"/>
    <property type="project" value="UniProtKB-UniRule"/>
</dbReference>
<dbReference type="GO" id="GO:0006633">
    <property type="term" value="P:fatty acid biosynthetic process"/>
    <property type="evidence" value="ECO:0007669"/>
    <property type="project" value="UniProtKB-KW"/>
</dbReference>
<dbReference type="GO" id="GO:2001295">
    <property type="term" value="P:malonyl-CoA biosynthetic process"/>
    <property type="evidence" value="ECO:0007669"/>
    <property type="project" value="UniProtKB-UniRule"/>
</dbReference>
<dbReference type="Gene3D" id="3.90.226.10">
    <property type="entry name" value="2-enoyl-CoA Hydratase, Chain A, domain 1"/>
    <property type="match status" value="1"/>
</dbReference>
<dbReference type="HAMAP" id="MF_00823">
    <property type="entry name" value="AcetylCoA_CT_alpha"/>
    <property type="match status" value="1"/>
</dbReference>
<dbReference type="InterPro" id="IPR001095">
    <property type="entry name" value="Acetyl_CoA_COase_a_su"/>
</dbReference>
<dbReference type="InterPro" id="IPR029045">
    <property type="entry name" value="ClpP/crotonase-like_dom_sf"/>
</dbReference>
<dbReference type="InterPro" id="IPR011763">
    <property type="entry name" value="COA_CT_C"/>
</dbReference>
<dbReference type="NCBIfam" id="TIGR00513">
    <property type="entry name" value="accA"/>
    <property type="match status" value="1"/>
</dbReference>
<dbReference type="NCBIfam" id="NF041504">
    <property type="entry name" value="AccA_sub"/>
    <property type="match status" value="1"/>
</dbReference>
<dbReference type="NCBIfam" id="NF004344">
    <property type="entry name" value="PRK05724.1"/>
    <property type="match status" value="1"/>
</dbReference>
<dbReference type="PANTHER" id="PTHR42853">
    <property type="entry name" value="ACETYL-COENZYME A CARBOXYLASE CARBOXYL TRANSFERASE SUBUNIT ALPHA"/>
    <property type="match status" value="1"/>
</dbReference>
<dbReference type="PANTHER" id="PTHR42853:SF3">
    <property type="entry name" value="ACETYL-COENZYME A CARBOXYLASE CARBOXYL TRANSFERASE SUBUNIT ALPHA, CHLOROPLASTIC"/>
    <property type="match status" value="1"/>
</dbReference>
<dbReference type="Pfam" id="PF03255">
    <property type="entry name" value="ACCA"/>
    <property type="match status" value="1"/>
</dbReference>
<dbReference type="PRINTS" id="PR01069">
    <property type="entry name" value="ACCCTRFRASEA"/>
</dbReference>
<dbReference type="SUPFAM" id="SSF52096">
    <property type="entry name" value="ClpP/crotonase"/>
    <property type="match status" value="1"/>
</dbReference>
<dbReference type="PROSITE" id="PS50989">
    <property type="entry name" value="COA_CT_CTER"/>
    <property type="match status" value="1"/>
</dbReference>
<sequence>MKIVFLDFEKGIEEFEAKIEQLRFAQDNSALDISAEIARLQTKSLGLTKSVYAKLTPWQISQVARHPQRPYTLDYVQHLFTDFEELHGDRNFADDQAIVGGLARFNGQTVMIIGHQKGRDTKEKIHRNFGMPKPEGYRKALRLMRLAEKFSIPLITFIDTPGAYPGIDAEERGQSEAIGKNLYVMAGLRIPIICVIIGEGGSGGALAIAVGDTSLMLQYSTYSVISPEGCASILWKSADKASDAAEILGITADRLKEMGLIDSIIPEPIGGAHRDYPVVMQSVKQTLQESLRKLQDIPLETLLQKRLDRLLGYGRFKINQPD</sequence>